<dbReference type="EC" id="2.7.1.39" evidence="1"/>
<dbReference type="EMBL" id="CP000034">
    <property type="protein sequence ID" value="ABB60243.1"/>
    <property type="molecule type" value="Genomic_DNA"/>
</dbReference>
<dbReference type="RefSeq" id="WP_000241660.1">
    <property type="nucleotide sequence ID" value="NC_007606.1"/>
</dbReference>
<dbReference type="RefSeq" id="YP_401731.1">
    <property type="nucleotide sequence ID" value="NC_007606.1"/>
</dbReference>
<dbReference type="SMR" id="Q32KB5"/>
<dbReference type="STRING" id="300267.SDY_0003"/>
<dbReference type="EnsemblBacteria" id="ABB60243">
    <property type="protein sequence ID" value="ABB60243"/>
    <property type="gene ID" value="SDY_0003"/>
</dbReference>
<dbReference type="GeneID" id="75202912"/>
<dbReference type="KEGG" id="sdy:SDY_0003"/>
<dbReference type="PATRIC" id="fig|300267.13.peg.2"/>
<dbReference type="HOGENOM" id="CLU_041243_1_1_6"/>
<dbReference type="UniPathway" id="UPA00050">
    <property type="reaction ID" value="UER00064"/>
</dbReference>
<dbReference type="Proteomes" id="UP000002716">
    <property type="component" value="Chromosome"/>
</dbReference>
<dbReference type="GO" id="GO:0005737">
    <property type="term" value="C:cytoplasm"/>
    <property type="evidence" value="ECO:0007669"/>
    <property type="project" value="UniProtKB-SubCell"/>
</dbReference>
<dbReference type="GO" id="GO:0005524">
    <property type="term" value="F:ATP binding"/>
    <property type="evidence" value="ECO:0007669"/>
    <property type="project" value="UniProtKB-UniRule"/>
</dbReference>
<dbReference type="GO" id="GO:0004413">
    <property type="term" value="F:homoserine kinase activity"/>
    <property type="evidence" value="ECO:0007669"/>
    <property type="project" value="UniProtKB-UniRule"/>
</dbReference>
<dbReference type="GO" id="GO:0009088">
    <property type="term" value="P:threonine biosynthetic process"/>
    <property type="evidence" value="ECO:0007669"/>
    <property type="project" value="UniProtKB-UniRule"/>
</dbReference>
<dbReference type="FunFam" id="3.30.230.10:FF:000020">
    <property type="entry name" value="Homoserine kinase"/>
    <property type="match status" value="1"/>
</dbReference>
<dbReference type="FunFam" id="3.30.70.890:FF:000002">
    <property type="entry name" value="Homoserine kinase"/>
    <property type="match status" value="1"/>
</dbReference>
<dbReference type="Gene3D" id="3.30.230.10">
    <property type="match status" value="1"/>
</dbReference>
<dbReference type="Gene3D" id="3.30.70.890">
    <property type="entry name" value="GHMP kinase, C-terminal domain"/>
    <property type="match status" value="1"/>
</dbReference>
<dbReference type="HAMAP" id="MF_00384">
    <property type="entry name" value="Homoser_kinase"/>
    <property type="match status" value="1"/>
</dbReference>
<dbReference type="InterPro" id="IPR013750">
    <property type="entry name" value="GHMP_kinase_C_dom"/>
</dbReference>
<dbReference type="InterPro" id="IPR036554">
    <property type="entry name" value="GHMP_kinase_C_sf"/>
</dbReference>
<dbReference type="InterPro" id="IPR006204">
    <property type="entry name" value="GHMP_kinase_N_dom"/>
</dbReference>
<dbReference type="InterPro" id="IPR006203">
    <property type="entry name" value="GHMP_knse_ATP-bd_CS"/>
</dbReference>
<dbReference type="InterPro" id="IPR000870">
    <property type="entry name" value="Homoserine_kinase"/>
</dbReference>
<dbReference type="InterPro" id="IPR020568">
    <property type="entry name" value="Ribosomal_Su5_D2-typ_SF"/>
</dbReference>
<dbReference type="InterPro" id="IPR014721">
    <property type="entry name" value="Ribsml_uS5_D2-typ_fold_subgr"/>
</dbReference>
<dbReference type="NCBIfam" id="NF002288">
    <property type="entry name" value="PRK01212.1-4"/>
    <property type="match status" value="1"/>
</dbReference>
<dbReference type="NCBIfam" id="TIGR00191">
    <property type="entry name" value="thrB"/>
    <property type="match status" value="1"/>
</dbReference>
<dbReference type="PANTHER" id="PTHR20861:SF1">
    <property type="entry name" value="HOMOSERINE KINASE"/>
    <property type="match status" value="1"/>
</dbReference>
<dbReference type="PANTHER" id="PTHR20861">
    <property type="entry name" value="HOMOSERINE/4-DIPHOSPHOCYTIDYL-2-C-METHYL-D-ERYTHRITOL KINASE"/>
    <property type="match status" value="1"/>
</dbReference>
<dbReference type="Pfam" id="PF08544">
    <property type="entry name" value="GHMP_kinases_C"/>
    <property type="match status" value="1"/>
</dbReference>
<dbReference type="Pfam" id="PF00288">
    <property type="entry name" value="GHMP_kinases_N"/>
    <property type="match status" value="1"/>
</dbReference>
<dbReference type="PIRSF" id="PIRSF000676">
    <property type="entry name" value="Homoser_kin"/>
    <property type="match status" value="1"/>
</dbReference>
<dbReference type="PRINTS" id="PR00958">
    <property type="entry name" value="HOMSERKINASE"/>
</dbReference>
<dbReference type="SUPFAM" id="SSF55060">
    <property type="entry name" value="GHMP Kinase, C-terminal domain"/>
    <property type="match status" value="1"/>
</dbReference>
<dbReference type="SUPFAM" id="SSF54211">
    <property type="entry name" value="Ribosomal protein S5 domain 2-like"/>
    <property type="match status" value="1"/>
</dbReference>
<dbReference type="PROSITE" id="PS00627">
    <property type="entry name" value="GHMP_KINASES_ATP"/>
    <property type="match status" value="1"/>
</dbReference>
<gene>
    <name evidence="1" type="primary">thrB</name>
    <name type="ordered locus">SDY_0003</name>
</gene>
<name>KHSE_SHIDS</name>
<organism>
    <name type="scientific">Shigella dysenteriae serotype 1 (strain Sd197)</name>
    <dbReference type="NCBI Taxonomy" id="300267"/>
    <lineage>
        <taxon>Bacteria</taxon>
        <taxon>Pseudomonadati</taxon>
        <taxon>Pseudomonadota</taxon>
        <taxon>Gammaproteobacteria</taxon>
        <taxon>Enterobacterales</taxon>
        <taxon>Enterobacteriaceae</taxon>
        <taxon>Shigella</taxon>
    </lineage>
</organism>
<feature type="chain" id="PRO_1000049164" description="Homoserine kinase">
    <location>
        <begin position="1"/>
        <end position="310"/>
    </location>
</feature>
<feature type="binding site" evidence="1">
    <location>
        <begin position="91"/>
        <end position="101"/>
    </location>
    <ligand>
        <name>ATP</name>
        <dbReference type="ChEBI" id="CHEBI:30616"/>
    </ligand>
</feature>
<protein>
    <recommendedName>
        <fullName evidence="1">Homoserine kinase</fullName>
        <shortName evidence="1">HK</shortName>
        <shortName evidence="1">HSK</shortName>
        <ecNumber evidence="1">2.7.1.39</ecNumber>
    </recommendedName>
</protein>
<reference key="1">
    <citation type="journal article" date="2005" name="Nucleic Acids Res.">
        <title>Genome dynamics and diversity of Shigella species, the etiologic agents of bacillary dysentery.</title>
        <authorList>
            <person name="Yang F."/>
            <person name="Yang J."/>
            <person name="Zhang X."/>
            <person name="Chen L."/>
            <person name="Jiang Y."/>
            <person name="Yan Y."/>
            <person name="Tang X."/>
            <person name="Wang J."/>
            <person name="Xiong Z."/>
            <person name="Dong J."/>
            <person name="Xue Y."/>
            <person name="Zhu Y."/>
            <person name="Xu X."/>
            <person name="Sun L."/>
            <person name="Chen S."/>
            <person name="Nie H."/>
            <person name="Peng J."/>
            <person name="Xu J."/>
            <person name="Wang Y."/>
            <person name="Yuan Z."/>
            <person name="Wen Y."/>
            <person name="Yao Z."/>
            <person name="Shen Y."/>
            <person name="Qiang B."/>
            <person name="Hou Y."/>
            <person name="Yu J."/>
            <person name="Jin Q."/>
        </authorList>
    </citation>
    <scope>NUCLEOTIDE SEQUENCE [LARGE SCALE GENOMIC DNA]</scope>
    <source>
        <strain>Sd197</strain>
    </source>
</reference>
<proteinExistence type="inferred from homology"/>
<keyword id="KW-0028">Amino-acid biosynthesis</keyword>
<keyword id="KW-0067">ATP-binding</keyword>
<keyword id="KW-0963">Cytoplasm</keyword>
<keyword id="KW-0418">Kinase</keyword>
<keyword id="KW-0547">Nucleotide-binding</keyword>
<keyword id="KW-1185">Reference proteome</keyword>
<keyword id="KW-0791">Threonine biosynthesis</keyword>
<keyword id="KW-0808">Transferase</keyword>
<evidence type="ECO:0000255" key="1">
    <source>
        <dbReference type="HAMAP-Rule" id="MF_00384"/>
    </source>
</evidence>
<accession>Q32KB5</accession>
<sequence length="310" mass="33610">MVKVYAPASSANMSVGFDVLGAAVTPVDGALLGDVVTVEAAETFSLNNLGRFADKLPSEPRENIVYQCWERFCQELGKQIPVAMTLEKNMPIGSGLGSSACSVVAALMAMNEHCGKPLNDTRLLALMGELEGRISGSIHYDNVAPCFLGGMQLMIEENDIISQQVPGFDEWLWVLAYPGIKVSTAEARAILPAQYRRQDCIAHGRHLAGFIHACYSRQPELAAKLMKDVIAEPYRERLLPGFRQARQAVAEIGAVASGISGSGPTLFALCDKPDTAQRVADWLGKNYLQNQEGFVHICRLDTAGARVLEN</sequence>
<comment type="function">
    <text evidence="1">Catalyzes the ATP-dependent phosphorylation of L-homoserine to L-homoserine phosphate.</text>
</comment>
<comment type="catalytic activity">
    <reaction evidence="1">
        <text>L-homoserine + ATP = O-phospho-L-homoserine + ADP + H(+)</text>
        <dbReference type="Rhea" id="RHEA:13985"/>
        <dbReference type="ChEBI" id="CHEBI:15378"/>
        <dbReference type="ChEBI" id="CHEBI:30616"/>
        <dbReference type="ChEBI" id="CHEBI:57476"/>
        <dbReference type="ChEBI" id="CHEBI:57590"/>
        <dbReference type="ChEBI" id="CHEBI:456216"/>
        <dbReference type="EC" id="2.7.1.39"/>
    </reaction>
</comment>
<comment type="pathway">
    <text evidence="1">Amino-acid biosynthesis; L-threonine biosynthesis; L-threonine from L-aspartate: step 4/5.</text>
</comment>
<comment type="subcellular location">
    <subcellularLocation>
        <location evidence="1">Cytoplasm</location>
    </subcellularLocation>
</comment>
<comment type="similarity">
    <text evidence="1">Belongs to the GHMP kinase family. Homoserine kinase subfamily.</text>
</comment>